<proteinExistence type="inferred from homology"/>
<comment type="function">
    <text evidence="1">NQR complex catalyzes the reduction of ubiquinone-1 to ubiquinol by two successive reactions, coupled with the transport of Na(+) ions from the cytoplasm to the periplasm. NqrA to NqrE are probably involved in the second step, the conversion of ubisemiquinone to ubiquinol.</text>
</comment>
<comment type="catalytic activity">
    <reaction evidence="1">
        <text>a ubiquinone + n Na(+)(in) + NADH + H(+) = a ubiquinol + n Na(+)(out) + NAD(+)</text>
        <dbReference type="Rhea" id="RHEA:47748"/>
        <dbReference type="Rhea" id="RHEA-COMP:9565"/>
        <dbReference type="Rhea" id="RHEA-COMP:9566"/>
        <dbReference type="ChEBI" id="CHEBI:15378"/>
        <dbReference type="ChEBI" id="CHEBI:16389"/>
        <dbReference type="ChEBI" id="CHEBI:17976"/>
        <dbReference type="ChEBI" id="CHEBI:29101"/>
        <dbReference type="ChEBI" id="CHEBI:57540"/>
        <dbReference type="ChEBI" id="CHEBI:57945"/>
        <dbReference type="EC" id="7.2.1.1"/>
    </reaction>
</comment>
<comment type="subunit">
    <text evidence="1">Composed of six subunits; NqrA, NqrB, NqrC, NqrD, NqrE and NqrF.</text>
</comment>
<comment type="subcellular location">
    <subcellularLocation>
        <location evidence="1">Cell inner membrane</location>
        <topology evidence="1">Multi-pass membrane protein</topology>
    </subcellularLocation>
</comment>
<comment type="similarity">
    <text evidence="1">Belongs to the NqrDE/RnfAE family.</text>
</comment>
<keyword id="KW-0997">Cell inner membrane</keyword>
<keyword id="KW-1003">Cell membrane</keyword>
<keyword id="KW-0406">Ion transport</keyword>
<keyword id="KW-0472">Membrane</keyword>
<keyword id="KW-0520">NAD</keyword>
<keyword id="KW-0915">Sodium</keyword>
<keyword id="KW-0739">Sodium transport</keyword>
<keyword id="KW-1278">Translocase</keyword>
<keyword id="KW-0812">Transmembrane</keyword>
<keyword id="KW-1133">Transmembrane helix</keyword>
<keyword id="KW-0813">Transport</keyword>
<keyword id="KW-0830">Ubiquinone</keyword>
<accession>A1JNZ5</accession>
<protein>
    <recommendedName>
        <fullName evidence="1">Na(+)-translocating NADH-quinone reductase subunit D</fullName>
        <shortName evidence="1">Na(+)-NQR subunit D</shortName>
        <shortName evidence="1">Na(+)-translocating NQR subunit D</shortName>
        <ecNumber evidence="1">7.2.1.1</ecNumber>
    </recommendedName>
    <alternativeName>
        <fullName evidence="1">NQR complex subunit D</fullName>
    </alternativeName>
    <alternativeName>
        <fullName evidence="1">NQR-1 subunit D</fullName>
    </alternativeName>
</protein>
<gene>
    <name evidence="1" type="primary">nqrD</name>
    <name type="ordered locus">YE3217</name>
</gene>
<feature type="chain" id="PRO_1000060177" description="Na(+)-translocating NADH-quinone reductase subunit D">
    <location>
        <begin position="1"/>
        <end position="209"/>
    </location>
</feature>
<feature type="transmembrane region" description="Helical" evidence="1">
    <location>
        <begin position="42"/>
        <end position="62"/>
    </location>
</feature>
<feature type="transmembrane region" description="Helical" evidence="1">
    <location>
        <begin position="70"/>
        <end position="90"/>
    </location>
</feature>
<feature type="transmembrane region" description="Helical" evidence="1">
    <location>
        <begin position="103"/>
        <end position="123"/>
    </location>
</feature>
<feature type="transmembrane region" description="Helical" evidence="1">
    <location>
        <begin position="131"/>
        <end position="151"/>
    </location>
</feature>
<feature type="transmembrane region" description="Helical" evidence="1">
    <location>
        <begin position="178"/>
        <end position="198"/>
    </location>
</feature>
<evidence type="ECO:0000255" key="1">
    <source>
        <dbReference type="HAMAP-Rule" id="MF_00428"/>
    </source>
</evidence>
<dbReference type="EC" id="7.2.1.1" evidence="1"/>
<dbReference type="EMBL" id="AM286415">
    <property type="protein sequence ID" value="CAL13249.1"/>
    <property type="molecule type" value="Genomic_DNA"/>
</dbReference>
<dbReference type="RefSeq" id="WP_005160493.1">
    <property type="nucleotide sequence ID" value="NC_008800.1"/>
</dbReference>
<dbReference type="RefSeq" id="YP_001007393.1">
    <property type="nucleotide sequence ID" value="NC_008800.1"/>
</dbReference>
<dbReference type="SMR" id="A1JNZ5"/>
<dbReference type="KEGG" id="yen:YE3217"/>
<dbReference type="PATRIC" id="fig|393305.7.peg.3421"/>
<dbReference type="eggNOG" id="COG1347">
    <property type="taxonomic scope" value="Bacteria"/>
</dbReference>
<dbReference type="HOGENOM" id="CLU_046659_1_1_6"/>
<dbReference type="OrthoDB" id="9782945at2"/>
<dbReference type="Proteomes" id="UP000000642">
    <property type="component" value="Chromosome"/>
</dbReference>
<dbReference type="GO" id="GO:0005886">
    <property type="term" value="C:plasma membrane"/>
    <property type="evidence" value="ECO:0007669"/>
    <property type="project" value="UniProtKB-SubCell"/>
</dbReference>
<dbReference type="GO" id="GO:0016655">
    <property type="term" value="F:oxidoreductase activity, acting on NAD(P)H, quinone or similar compound as acceptor"/>
    <property type="evidence" value="ECO:0007669"/>
    <property type="project" value="UniProtKB-UniRule"/>
</dbReference>
<dbReference type="GO" id="GO:0006814">
    <property type="term" value="P:sodium ion transport"/>
    <property type="evidence" value="ECO:0007669"/>
    <property type="project" value="UniProtKB-UniRule"/>
</dbReference>
<dbReference type="HAMAP" id="MF_00428">
    <property type="entry name" value="NqrD"/>
    <property type="match status" value="1"/>
</dbReference>
<dbReference type="InterPro" id="IPR011292">
    <property type="entry name" value="NqrD"/>
</dbReference>
<dbReference type="InterPro" id="IPR003667">
    <property type="entry name" value="NqrDE/RnfAE"/>
</dbReference>
<dbReference type="NCBIfam" id="TIGR01939">
    <property type="entry name" value="nqrD"/>
    <property type="match status" value="1"/>
</dbReference>
<dbReference type="NCBIfam" id="NF006777">
    <property type="entry name" value="PRK09292.1"/>
    <property type="match status" value="1"/>
</dbReference>
<dbReference type="NCBIfam" id="NF009070">
    <property type="entry name" value="PRK12405.1"/>
    <property type="match status" value="1"/>
</dbReference>
<dbReference type="PANTHER" id="PTHR30586">
    <property type="entry name" value="ELECTRON TRANSPORT COMPLEX PROTEIN RNFE"/>
    <property type="match status" value="1"/>
</dbReference>
<dbReference type="PANTHER" id="PTHR30586:SF1">
    <property type="entry name" value="NA(+)-TRANSLOCATING NADH-QUINONE REDUCTASE SUBUNIT D"/>
    <property type="match status" value="1"/>
</dbReference>
<dbReference type="Pfam" id="PF02508">
    <property type="entry name" value="Rnf-Nqr"/>
    <property type="match status" value="1"/>
</dbReference>
<dbReference type="PIRSF" id="PIRSF006102">
    <property type="entry name" value="NQR_DE"/>
    <property type="match status" value="1"/>
</dbReference>
<reference key="1">
    <citation type="journal article" date="2006" name="PLoS Genet.">
        <title>The complete genome sequence and comparative genome analysis of the high pathogenicity Yersinia enterocolitica strain 8081.</title>
        <authorList>
            <person name="Thomson N.R."/>
            <person name="Howard S."/>
            <person name="Wren B.W."/>
            <person name="Holden M.T.G."/>
            <person name="Crossman L."/>
            <person name="Challis G.L."/>
            <person name="Churcher C."/>
            <person name="Mungall K."/>
            <person name="Brooks K."/>
            <person name="Chillingworth T."/>
            <person name="Feltwell T."/>
            <person name="Abdellah Z."/>
            <person name="Hauser H."/>
            <person name="Jagels K."/>
            <person name="Maddison M."/>
            <person name="Moule S."/>
            <person name="Sanders M."/>
            <person name="Whitehead S."/>
            <person name="Quail M.A."/>
            <person name="Dougan G."/>
            <person name="Parkhill J."/>
            <person name="Prentice M.B."/>
        </authorList>
    </citation>
    <scope>NUCLEOTIDE SEQUENCE [LARGE SCALE GENOMIC DNA]</scope>
    <source>
        <strain>NCTC 13174 / 8081</strain>
    </source>
</reference>
<organism>
    <name type="scientific">Yersinia enterocolitica serotype O:8 / biotype 1B (strain NCTC 13174 / 8081)</name>
    <dbReference type="NCBI Taxonomy" id="393305"/>
    <lineage>
        <taxon>Bacteria</taxon>
        <taxon>Pseudomonadati</taxon>
        <taxon>Pseudomonadota</taxon>
        <taxon>Gammaproteobacteria</taxon>
        <taxon>Enterobacterales</taxon>
        <taxon>Yersiniaceae</taxon>
        <taxon>Yersinia</taxon>
    </lineage>
</organism>
<sequence length="209" mass="22642">MADSKEIKRVLLGPLFDNNPIALQILGVCSALAVTTKLETALVMTLAVTLVTAFSSFFISLIRNHIPNSVRIIVQMVIIASLVIVVDQILRAYAYEISKQLSVFVGLIITNCIVMGRAEAYAMKSPPIESFMDGIGNGLGYGVVLVLVGFVRELIGSGKLFGVTVLETVQNGGWYQPNGLFLLAPSAFFIIGLLIWGLRTLKPAQIEKE</sequence>
<name>NQRD_YERE8</name>